<reference key="1">
    <citation type="journal article" date="2001" name="Nature">
        <title>Complete genome sequence of Salmonella enterica serovar Typhimurium LT2.</title>
        <authorList>
            <person name="McClelland M."/>
            <person name="Sanderson K.E."/>
            <person name="Spieth J."/>
            <person name="Clifton S.W."/>
            <person name="Latreille P."/>
            <person name="Courtney L."/>
            <person name="Porwollik S."/>
            <person name="Ali J."/>
            <person name="Dante M."/>
            <person name="Du F."/>
            <person name="Hou S."/>
            <person name="Layman D."/>
            <person name="Leonard S."/>
            <person name="Nguyen C."/>
            <person name="Scott K."/>
            <person name="Holmes A."/>
            <person name="Grewal N."/>
            <person name="Mulvaney E."/>
            <person name="Ryan E."/>
            <person name="Sun H."/>
            <person name="Florea L."/>
            <person name="Miller W."/>
            <person name="Stoneking T."/>
            <person name="Nhan M."/>
            <person name="Waterston R."/>
            <person name="Wilson R.K."/>
        </authorList>
    </citation>
    <scope>NUCLEOTIDE SEQUENCE [LARGE SCALE GENOMIC DNA]</scope>
    <source>
        <strain>LT2 / SGSC1412 / ATCC 700720</strain>
    </source>
</reference>
<protein>
    <recommendedName>
        <fullName evidence="1">Glycerol-3-phosphate acyltransferase</fullName>
    </recommendedName>
    <alternativeName>
        <fullName evidence="1">G3P acyltransferase</fullName>
        <shortName evidence="1">GPAT</shortName>
        <ecNumber evidence="1">2.3.1.15</ecNumber>
        <ecNumber evidence="1">2.3.1.n5</ecNumber>
    </alternativeName>
    <alternativeName>
        <fullName evidence="1">Lysophosphatidic acid synthase</fullName>
        <shortName evidence="1">LPA synthase</shortName>
    </alternativeName>
</protein>
<organism>
    <name type="scientific">Salmonella typhimurium (strain LT2 / SGSC1412 / ATCC 700720)</name>
    <dbReference type="NCBI Taxonomy" id="99287"/>
    <lineage>
        <taxon>Bacteria</taxon>
        <taxon>Pseudomonadati</taxon>
        <taxon>Pseudomonadota</taxon>
        <taxon>Gammaproteobacteria</taxon>
        <taxon>Enterobacterales</taxon>
        <taxon>Enterobacteriaceae</taxon>
        <taxon>Salmonella</taxon>
    </lineage>
</organism>
<feature type="chain" id="PRO_0000188442" description="Glycerol-3-phosphate acyltransferase">
    <location>
        <begin position="1"/>
        <end position="203"/>
    </location>
</feature>
<feature type="topological domain" description="Periplasmic" evidence="1">
    <location>
        <begin position="1"/>
        <end position="3"/>
    </location>
</feature>
<feature type="transmembrane region" description="Helical" evidence="1">
    <location>
        <begin position="4"/>
        <end position="24"/>
    </location>
</feature>
<feature type="topological domain" description="Cytoplasmic" evidence="1">
    <location>
        <begin position="25"/>
        <end position="52"/>
    </location>
</feature>
<feature type="transmembrane region" description="Helical" evidence="1">
    <location>
        <begin position="53"/>
        <end position="73"/>
    </location>
</feature>
<feature type="topological domain" description="Periplasmic" evidence="1">
    <location>
        <begin position="74"/>
        <end position="80"/>
    </location>
</feature>
<feature type="transmembrane region" description="Helical" evidence="1">
    <location>
        <begin position="81"/>
        <end position="101"/>
    </location>
</feature>
<feature type="topological domain" description="Cytoplasmic" evidence="1">
    <location>
        <begin position="102"/>
        <end position="111"/>
    </location>
</feature>
<feature type="transmembrane region" description="Helical" evidence="1">
    <location>
        <begin position="112"/>
        <end position="132"/>
    </location>
</feature>
<feature type="topological domain" description="Periplasmic" evidence="1">
    <location>
        <begin position="133"/>
        <end position="137"/>
    </location>
</feature>
<feature type="transmembrane region" description="Helical" evidence="1">
    <location>
        <begin position="138"/>
        <end position="158"/>
    </location>
</feature>
<feature type="topological domain" description="Cytoplasmic" evidence="1">
    <location>
        <begin position="159"/>
        <end position="203"/>
    </location>
</feature>
<sequence length="203" mass="21904">MSAIAPGMILFAYLCGSISSAILVCRIAGLPDPRESGSGNPGATNVLRIGGKGAAVAVLIFDILKGMLPVWGAYALGVTPFWLGLIAIAACLGHIWPVFFGFKGGKGVATAFGAIAPIGWDLTGVMAGTWLLTVLLSGYSSLGAIVSALIAPFYVWWFKPQFTFPVSMLSCLILLRHHDNIQRLWRRQETKIWTKLKKKRQKD</sequence>
<gene>
    <name evidence="1" type="primary">plsY</name>
    <name type="synonym">ygiH</name>
    <name type="ordered locus">STM3207</name>
</gene>
<accession>P67161</accession>
<accession>Q8XGX7</accession>
<evidence type="ECO:0000255" key="1">
    <source>
        <dbReference type="HAMAP-Rule" id="MF_01043"/>
    </source>
</evidence>
<comment type="function">
    <text evidence="1">Catalyzes the transfer of an acyl group from acyl-ACP to glycerol-3-phosphate (G3P) to form lysophosphatidic acid (LPA). This enzyme can also utilize acyl-CoA as fatty acyl donor, but not acyl-PO(4).</text>
</comment>
<comment type="catalytic activity">
    <reaction evidence="1">
        <text>sn-glycerol 3-phosphate + an acyl-CoA = a 1-acyl-sn-glycero-3-phosphate + CoA</text>
        <dbReference type="Rhea" id="RHEA:15325"/>
        <dbReference type="ChEBI" id="CHEBI:57287"/>
        <dbReference type="ChEBI" id="CHEBI:57597"/>
        <dbReference type="ChEBI" id="CHEBI:57970"/>
        <dbReference type="ChEBI" id="CHEBI:58342"/>
        <dbReference type="EC" id="2.3.1.15"/>
    </reaction>
</comment>
<comment type="catalytic activity">
    <reaction evidence="1">
        <text>a fatty acyl-[ACP] + sn-glycerol 3-phosphate = a 1-acyl-sn-glycero-3-phosphate + holo-[ACP]</text>
        <dbReference type="Rhea" id="RHEA:42300"/>
        <dbReference type="Rhea" id="RHEA-COMP:9685"/>
        <dbReference type="Rhea" id="RHEA-COMP:14125"/>
        <dbReference type="ChEBI" id="CHEBI:57597"/>
        <dbReference type="ChEBI" id="CHEBI:57970"/>
        <dbReference type="ChEBI" id="CHEBI:64479"/>
        <dbReference type="ChEBI" id="CHEBI:138651"/>
        <dbReference type="EC" id="2.3.1.n5"/>
    </reaction>
</comment>
<comment type="pathway">
    <text evidence="1">Lipid metabolism; phospholipid metabolism.</text>
</comment>
<comment type="subunit">
    <text evidence="1">Probably interacts with PlsX.</text>
</comment>
<comment type="subcellular location">
    <subcellularLocation>
        <location evidence="1">Cell inner membrane</location>
        <topology evidence="1">Multi-pass membrane protein</topology>
    </subcellularLocation>
</comment>
<comment type="similarity">
    <text evidence="1">Belongs to the PlsY family.</text>
</comment>
<proteinExistence type="inferred from homology"/>
<dbReference type="EC" id="2.3.1.15" evidence="1"/>
<dbReference type="EC" id="2.3.1.n5" evidence="1"/>
<dbReference type="EMBL" id="AE006468">
    <property type="protein sequence ID" value="AAL22081.1"/>
    <property type="molecule type" value="Genomic_DNA"/>
</dbReference>
<dbReference type="RefSeq" id="NP_462122.1">
    <property type="nucleotide sequence ID" value="NC_003197.2"/>
</dbReference>
<dbReference type="RefSeq" id="WP_001272784.1">
    <property type="nucleotide sequence ID" value="NC_003197.2"/>
</dbReference>
<dbReference type="SMR" id="P67161"/>
<dbReference type="STRING" id="99287.STM3207"/>
<dbReference type="PaxDb" id="99287-STM3207"/>
<dbReference type="GeneID" id="1254730"/>
<dbReference type="KEGG" id="stm:STM3207"/>
<dbReference type="PATRIC" id="fig|99287.12.peg.3402"/>
<dbReference type="HOGENOM" id="CLU_081254_0_2_6"/>
<dbReference type="OMA" id="PVWLGFK"/>
<dbReference type="PhylomeDB" id="P67161"/>
<dbReference type="BioCyc" id="SENT99287:STM3207-MONOMER"/>
<dbReference type="UniPathway" id="UPA00085"/>
<dbReference type="Proteomes" id="UP000001014">
    <property type="component" value="Chromosome"/>
</dbReference>
<dbReference type="GO" id="GO:0005886">
    <property type="term" value="C:plasma membrane"/>
    <property type="evidence" value="ECO:0000318"/>
    <property type="project" value="GO_Central"/>
</dbReference>
<dbReference type="GO" id="GO:0043772">
    <property type="term" value="F:acyl-phosphate glycerol-3-phosphate acyltransferase activity"/>
    <property type="evidence" value="ECO:0007669"/>
    <property type="project" value="InterPro"/>
</dbReference>
<dbReference type="GO" id="GO:0004366">
    <property type="term" value="F:glycerol-3-phosphate O-acyltransferase activity"/>
    <property type="evidence" value="ECO:0007669"/>
    <property type="project" value="UniProtKB-UniRule"/>
</dbReference>
<dbReference type="GO" id="GO:0008654">
    <property type="term" value="P:phospholipid biosynthetic process"/>
    <property type="evidence" value="ECO:0007669"/>
    <property type="project" value="UniProtKB-UniRule"/>
</dbReference>
<dbReference type="HAMAP" id="MF_01043">
    <property type="entry name" value="PlsY"/>
    <property type="match status" value="1"/>
</dbReference>
<dbReference type="InterPro" id="IPR003811">
    <property type="entry name" value="G3P_acylTferase_PlsY"/>
</dbReference>
<dbReference type="NCBIfam" id="TIGR00023">
    <property type="entry name" value="glycerol-3-phosphate 1-O-acyltransferase PlsY"/>
    <property type="match status" value="1"/>
</dbReference>
<dbReference type="PANTHER" id="PTHR30309:SF0">
    <property type="entry name" value="GLYCEROL-3-PHOSPHATE ACYLTRANSFERASE-RELATED"/>
    <property type="match status" value="1"/>
</dbReference>
<dbReference type="PANTHER" id="PTHR30309">
    <property type="entry name" value="INNER MEMBRANE PROTEIN YGIH"/>
    <property type="match status" value="1"/>
</dbReference>
<dbReference type="Pfam" id="PF02660">
    <property type="entry name" value="G3P_acyltransf"/>
    <property type="match status" value="1"/>
</dbReference>
<dbReference type="SMART" id="SM01207">
    <property type="entry name" value="G3P_acyltransf"/>
    <property type="match status" value="1"/>
</dbReference>
<keyword id="KW-0997">Cell inner membrane</keyword>
<keyword id="KW-1003">Cell membrane</keyword>
<keyword id="KW-0444">Lipid biosynthesis</keyword>
<keyword id="KW-0443">Lipid metabolism</keyword>
<keyword id="KW-0472">Membrane</keyword>
<keyword id="KW-0594">Phospholipid biosynthesis</keyword>
<keyword id="KW-1208">Phospholipid metabolism</keyword>
<keyword id="KW-1185">Reference proteome</keyword>
<keyword id="KW-0808">Transferase</keyword>
<keyword id="KW-0812">Transmembrane</keyword>
<keyword id="KW-1133">Transmembrane helix</keyword>
<name>PLSY_SALTY</name>